<accession>Q46IS5</accession>
<feature type="chain" id="PRO_0000230358" description="Small ribosomal subunit protein uS5">
    <location>
        <begin position="1"/>
        <end position="208"/>
    </location>
</feature>
<feature type="domain" description="S5 DRBM" evidence="1">
    <location>
        <begin position="52"/>
        <end position="115"/>
    </location>
</feature>
<feature type="region of interest" description="Disordered" evidence="2">
    <location>
        <begin position="1"/>
        <end position="54"/>
    </location>
</feature>
<feature type="compositionally biased region" description="Polar residues" evidence="2">
    <location>
        <begin position="1"/>
        <end position="15"/>
    </location>
</feature>
<feature type="compositionally biased region" description="Basic and acidic residues" evidence="2">
    <location>
        <begin position="25"/>
        <end position="37"/>
    </location>
</feature>
<feature type="compositionally biased region" description="Basic and acidic residues" evidence="2">
    <location>
        <begin position="44"/>
        <end position="54"/>
    </location>
</feature>
<reference key="1">
    <citation type="journal article" date="2007" name="PLoS Genet.">
        <title>Patterns and implications of gene gain and loss in the evolution of Prochlorococcus.</title>
        <authorList>
            <person name="Kettler G.C."/>
            <person name="Martiny A.C."/>
            <person name="Huang K."/>
            <person name="Zucker J."/>
            <person name="Coleman M.L."/>
            <person name="Rodrigue S."/>
            <person name="Chen F."/>
            <person name="Lapidus A."/>
            <person name="Ferriera S."/>
            <person name="Johnson J."/>
            <person name="Steglich C."/>
            <person name="Church G.M."/>
            <person name="Richardson P."/>
            <person name="Chisholm S.W."/>
        </authorList>
    </citation>
    <scope>NUCLEOTIDE SEQUENCE [LARGE SCALE GENOMIC DNA]</scope>
    <source>
        <strain>NATL2A</strain>
    </source>
</reference>
<dbReference type="EMBL" id="CP000095">
    <property type="protein sequence ID" value="AAZ58603.1"/>
    <property type="molecule type" value="Genomic_DNA"/>
</dbReference>
<dbReference type="RefSeq" id="WP_011295457.1">
    <property type="nucleotide sequence ID" value="NC_007335.2"/>
</dbReference>
<dbReference type="SMR" id="Q46IS5"/>
<dbReference type="STRING" id="59920.PMN2A_1113"/>
<dbReference type="KEGG" id="pmn:PMN2A_1113"/>
<dbReference type="HOGENOM" id="CLU_065898_2_1_3"/>
<dbReference type="OrthoDB" id="9809045at2"/>
<dbReference type="PhylomeDB" id="Q46IS5"/>
<dbReference type="Proteomes" id="UP000002535">
    <property type="component" value="Chromosome"/>
</dbReference>
<dbReference type="GO" id="GO:0015935">
    <property type="term" value="C:small ribosomal subunit"/>
    <property type="evidence" value="ECO:0007669"/>
    <property type="project" value="InterPro"/>
</dbReference>
<dbReference type="GO" id="GO:0019843">
    <property type="term" value="F:rRNA binding"/>
    <property type="evidence" value="ECO:0007669"/>
    <property type="project" value="UniProtKB-UniRule"/>
</dbReference>
<dbReference type="GO" id="GO:0003735">
    <property type="term" value="F:structural constituent of ribosome"/>
    <property type="evidence" value="ECO:0007669"/>
    <property type="project" value="InterPro"/>
</dbReference>
<dbReference type="GO" id="GO:0006412">
    <property type="term" value="P:translation"/>
    <property type="evidence" value="ECO:0007669"/>
    <property type="project" value="UniProtKB-UniRule"/>
</dbReference>
<dbReference type="FunFam" id="3.30.230.10:FF:000002">
    <property type="entry name" value="30S ribosomal protein S5"/>
    <property type="match status" value="1"/>
</dbReference>
<dbReference type="Gene3D" id="3.30.160.20">
    <property type="match status" value="1"/>
</dbReference>
<dbReference type="Gene3D" id="3.30.230.10">
    <property type="match status" value="1"/>
</dbReference>
<dbReference type="HAMAP" id="MF_01307_B">
    <property type="entry name" value="Ribosomal_uS5_B"/>
    <property type="match status" value="1"/>
</dbReference>
<dbReference type="InterPro" id="IPR020568">
    <property type="entry name" value="Ribosomal_Su5_D2-typ_SF"/>
</dbReference>
<dbReference type="InterPro" id="IPR000851">
    <property type="entry name" value="Ribosomal_uS5"/>
</dbReference>
<dbReference type="InterPro" id="IPR005712">
    <property type="entry name" value="Ribosomal_uS5_bac-type"/>
</dbReference>
<dbReference type="InterPro" id="IPR005324">
    <property type="entry name" value="Ribosomal_uS5_C"/>
</dbReference>
<dbReference type="InterPro" id="IPR013810">
    <property type="entry name" value="Ribosomal_uS5_N"/>
</dbReference>
<dbReference type="InterPro" id="IPR018192">
    <property type="entry name" value="Ribosomal_uS5_N_CS"/>
</dbReference>
<dbReference type="InterPro" id="IPR014721">
    <property type="entry name" value="Ribsml_uS5_D2-typ_fold_subgr"/>
</dbReference>
<dbReference type="NCBIfam" id="TIGR01021">
    <property type="entry name" value="rpsE_bact"/>
    <property type="match status" value="1"/>
</dbReference>
<dbReference type="PANTHER" id="PTHR48277">
    <property type="entry name" value="MITOCHONDRIAL RIBOSOMAL PROTEIN S5"/>
    <property type="match status" value="1"/>
</dbReference>
<dbReference type="PANTHER" id="PTHR48277:SF1">
    <property type="entry name" value="MITOCHONDRIAL RIBOSOMAL PROTEIN S5"/>
    <property type="match status" value="1"/>
</dbReference>
<dbReference type="Pfam" id="PF00333">
    <property type="entry name" value="Ribosomal_S5"/>
    <property type="match status" value="1"/>
</dbReference>
<dbReference type="Pfam" id="PF03719">
    <property type="entry name" value="Ribosomal_S5_C"/>
    <property type="match status" value="1"/>
</dbReference>
<dbReference type="SUPFAM" id="SSF54768">
    <property type="entry name" value="dsRNA-binding domain-like"/>
    <property type="match status" value="1"/>
</dbReference>
<dbReference type="SUPFAM" id="SSF54211">
    <property type="entry name" value="Ribosomal protein S5 domain 2-like"/>
    <property type="match status" value="1"/>
</dbReference>
<dbReference type="PROSITE" id="PS00585">
    <property type="entry name" value="RIBOSOMAL_S5"/>
    <property type="match status" value="1"/>
</dbReference>
<dbReference type="PROSITE" id="PS50881">
    <property type="entry name" value="S5_DSRBD"/>
    <property type="match status" value="1"/>
</dbReference>
<comment type="function">
    <text evidence="1">With S4 and S12 plays an important role in translational accuracy.</text>
</comment>
<comment type="function">
    <text evidence="1">Located at the back of the 30S subunit body where it stabilizes the conformation of the head with respect to the body.</text>
</comment>
<comment type="subunit">
    <text evidence="1">Part of the 30S ribosomal subunit. Contacts proteins S4 and S8.</text>
</comment>
<comment type="domain">
    <text>The N-terminal domain interacts with the head of the 30S subunit; the C-terminal domain interacts with the body and contacts protein S4. The interaction surface between S4 and S5 is involved in control of translational fidelity.</text>
</comment>
<comment type="similarity">
    <text evidence="1">Belongs to the universal ribosomal protein uS5 family.</text>
</comment>
<sequence>MTDSNNQSPNKKTSGSSSAPPAADGRQENRRSRGEKRGGRRDRRGQERDSEWQERVVQIRRVSKTVKGGKKMSFRAIVVVGNEKGQVGVGVGKAGDVIGAVRKGVADGKKHLVRVPLTRNSSIPTLSNGRDGAASVLIRPAAPGTGVIAGGSIRTVLELAGIKNVLAKRLGSKTPLNNARAAMVALSELRTHKATAKERGISLEQIYS</sequence>
<proteinExistence type="inferred from homology"/>
<keyword id="KW-1185">Reference proteome</keyword>
<keyword id="KW-0687">Ribonucleoprotein</keyword>
<keyword id="KW-0689">Ribosomal protein</keyword>
<keyword id="KW-0694">RNA-binding</keyword>
<keyword id="KW-0699">rRNA-binding</keyword>
<gene>
    <name evidence="1" type="primary">rpsE</name>
    <name evidence="1" type="synonym">rps5</name>
    <name type="ordered locus">PMN2A_1113</name>
</gene>
<protein>
    <recommendedName>
        <fullName evidence="1">Small ribosomal subunit protein uS5</fullName>
    </recommendedName>
    <alternativeName>
        <fullName evidence="3">30S ribosomal protein S5</fullName>
    </alternativeName>
</protein>
<evidence type="ECO:0000255" key="1">
    <source>
        <dbReference type="HAMAP-Rule" id="MF_01307"/>
    </source>
</evidence>
<evidence type="ECO:0000256" key="2">
    <source>
        <dbReference type="SAM" id="MobiDB-lite"/>
    </source>
</evidence>
<evidence type="ECO:0000305" key="3"/>
<organism>
    <name type="scientific">Prochlorococcus marinus (strain NATL2A)</name>
    <dbReference type="NCBI Taxonomy" id="59920"/>
    <lineage>
        <taxon>Bacteria</taxon>
        <taxon>Bacillati</taxon>
        <taxon>Cyanobacteriota</taxon>
        <taxon>Cyanophyceae</taxon>
        <taxon>Synechococcales</taxon>
        <taxon>Prochlorococcaceae</taxon>
        <taxon>Prochlorococcus</taxon>
    </lineage>
</organism>
<name>RS5_PROMT</name>